<keyword id="KW-0012">Acyltransferase</keyword>
<keyword id="KW-0963">Cytoplasm</keyword>
<keyword id="KW-0408">Iron</keyword>
<keyword id="KW-0479">Metal-binding</keyword>
<keyword id="KW-0808">Transferase</keyword>
<keyword id="KW-0819">tRNA processing</keyword>
<feature type="chain" id="PRO_1000184962" description="tRNA N6-adenosine threonylcarbamoyltransferase">
    <location>
        <begin position="1"/>
        <end position="361"/>
    </location>
</feature>
<feature type="binding site" evidence="1">
    <location>
        <position position="110"/>
    </location>
    <ligand>
        <name>Fe cation</name>
        <dbReference type="ChEBI" id="CHEBI:24875"/>
    </ligand>
</feature>
<feature type="binding site" evidence="1">
    <location>
        <position position="114"/>
    </location>
    <ligand>
        <name>Fe cation</name>
        <dbReference type="ChEBI" id="CHEBI:24875"/>
    </ligand>
</feature>
<feature type="binding site" evidence="1">
    <location>
        <begin position="132"/>
        <end position="136"/>
    </location>
    <ligand>
        <name>substrate</name>
    </ligand>
</feature>
<feature type="binding site" evidence="1">
    <location>
        <position position="165"/>
    </location>
    <ligand>
        <name>substrate</name>
    </ligand>
</feature>
<feature type="binding site" evidence="1">
    <location>
        <position position="178"/>
    </location>
    <ligand>
        <name>substrate</name>
    </ligand>
</feature>
<feature type="binding site" evidence="1">
    <location>
        <position position="182"/>
    </location>
    <ligand>
        <name>substrate</name>
    </ligand>
</feature>
<feature type="binding site" evidence="1">
    <location>
        <position position="284"/>
    </location>
    <ligand>
        <name>substrate</name>
    </ligand>
</feature>
<feature type="binding site" evidence="1">
    <location>
        <position position="312"/>
    </location>
    <ligand>
        <name>Fe cation</name>
        <dbReference type="ChEBI" id="CHEBI:24875"/>
    </ligand>
</feature>
<evidence type="ECO:0000255" key="1">
    <source>
        <dbReference type="HAMAP-Rule" id="MF_01445"/>
    </source>
</evidence>
<dbReference type="EC" id="2.3.1.234" evidence="1"/>
<dbReference type="EMBL" id="CP001358">
    <property type="protein sequence ID" value="ACL49102.1"/>
    <property type="molecule type" value="Genomic_DNA"/>
</dbReference>
<dbReference type="SMR" id="B8J025"/>
<dbReference type="STRING" id="525146.Ddes_1198"/>
<dbReference type="KEGG" id="dds:Ddes_1198"/>
<dbReference type="eggNOG" id="COG0533">
    <property type="taxonomic scope" value="Bacteria"/>
</dbReference>
<dbReference type="HOGENOM" id="CLU_023208_0_2_7"/>
<dbReference type="GO" id="GO:0005737">
    <property type="term" value="C:cytoplasm"/>
    <property type="evidence" value="ECO:0007669"/>
    <property type="project" value="UniProtKB-SubCell"/>
</dbReference>
<dbReference type="GO" id="GO:0005506">
    <property type="term" value="F:iron ion binding"/>
    <property type="evidence" value="ECO:0007669"/>
    <property type="project" value="UniProtKB-UniRule"/>
</dbReference>
<dbReference type="GO" id="GO:0061711">
    <property type="term" value="F:N(6)-L-threonylcarbamoyladenine synthase activity"/>
    <property type="evidence" value="ECO:0007669"/>
    <property type="project" value="UniProtKB-EC"/>
</dbReference>
<dbReference type="GO" id="GO:0002949">
    <property type="term" value="P:tRNA threonylcarbamoyladenosine modification"/>
    <property type="evidence" value="ECO:0007669"/>
    <property type="project" value="UniProtKB-UniRule"/>
</dbReference>
<dbReference type="CDD" id="cd24133">
    <property type="entry name" value="ASKHA_NBD_TsaD_bac"/>
    <property type="match status" value="1"/>
</dbReference>
<dbReference type="FunFam" id="3.30.420.40:FF:000012">
    <property type="entry name" value="tRNA N6-adenosine threonylcarbamoyltransferase"/>
    <property type="match status" value="1"/>
</dbReference>
<dbReference type="Gene3D" id="3.30.420.40">
    <property type="match status" value="2"/>
</dbReference>
<dbReference type="HAMAP" id="MF_01445">
    <property type="entry name" value="TsaD"/>
    <property type="match status" value="1"/>
</dbReference>
<dbReference type="InterPro" id="IPR043129">
    <property type="entry name" value="ATPase_NBD"/>
</dbReference>
<dbReference type="InterPro" id="IPR000905">
    <property type="entry name" value="Gcp-like_dom"/>
</dbReference>
<dbReference type="InterPro" id="IPR017861">
    <property type="entry name" value="KAE1/TsaD"/>
</dbReference>
<dbReference type="InterPro" id="IPR022450">
    <property type="entry name" value="TsaD"/>
</dbReference>
<dbReference type="NCBIfam" id="TIGR00329">
    <property type="entry name" value="gcp_kae1"/>
    <property type="match status" value="1"/>
</dbReference>
<dbReference type="NCBIfam" id="TIGR03723">
    <property type="entry name" value="T6A_TsaD_YgjD"/>
    <property type="match status" value="1"/>
</dbReference>
<dbReference type="PANTHER" id="PTHR11735">
    <property type="entry name" value="TRNA N6-ADENOSINE THREONYLCARBAMOYLTRANSFERASE"/>
    <property type="match status" value="1"/>
</dbReference>
<dbReference type="PANTHER" id="PTHR11735:SF6">
    <property type="entry name" value="TRNA N6-ADENOSINE THREONYLCARBAMOYLTRANSFERASE, MITOCHONDRIAL"/>
    <property type="match status" value="1"/>
</dbReference>
<dbReference type="Pfam" id="PF00814">
    <property type="entry name" value="TsaD"/>
    <property type="match status" value="1"/>
</dbReference>
<dbReference type="PRINTS" id="PR00789">
    <property type="entry name" value="OSIALOPTASE"/>
</dbReference>
<dbReference type="SUPFAM" id="SSF53067">
    <property type="entry name" value="Actin-like ATPase domain"/>
    <property type="match status" value="1"/>
</dbReference>
<name>TSAD_DESDA</name>
<sequence>MLCLGIESSCDETALALVEDGRLLHSVLSTQADMHALFGGVVPELASREHYRYIGPLFDELMRRSDKSNEEIDLVAVARGPGLLGSLLVGVAFAKGLAFSLGARFLGVNHLQAHLLAAGLEQPLKFPALGLLVSGGHTHLYRMETPWNCLPLGRTLDDAAGEAFDKVGKVLGLAYPGGRLMDALAGEGRADGIAFPRPYLDNDNLDFSFSGLKTAASTYVQQHFAGMTWPRPLGSTAAAPQELKDCCAAFNLAVVDTLCTKATRALDRNPQLKYLILAGGVACNSLLRQRVTELMERRGGQAIIPGPHLCTDNAAMIAYAGWLLGKEGYYHQLNMETVPRGRALPDDMRRCREYAEDLSET</sequence>
<reference key="1">
    <citation type="submission" date="2009-01" db="EMBL/GenBank/DDBJ databases">
        <title>Complete sequence of Desulfovibrio desulfuricans subsp. desulfuricans str. ATCC 27774.</title>
        <authorList>
            <consortium name="US DOE Joint Genome Institute"/>
            <person name="Lucas S."/>
            <person name="Copeland A."/>
            <person name="Lapidus A."/>
            <person name="Glavina del Rio T."/>
            <person name="Tice H."/>
            <person name="Bruce D."/>
            <person name="Goodwin L."/>
            <person name="Pitluck S."/>
            <person name="Sims D."/>
            <person name="Lu M."/>
            <person name="Kiss H."/>
            <person name="Meineke L."/>
            <person name="Brettin T."/>
            <person name="Detter J.C."/>
            <person name="Han C."/>
            <person name="Larimer F."/>
            <person name="Land M."/>
            <person name="Hauser L."/>
            <person name="Kyrpides N."/>
            <person name="Ovchinnikova G."/>
            <person name="Hazen T.C."/>
        </authorList>
    </citation>
    <scope>NUCLEOTIDE SEQUENCE [LARGE SCALE GENOMIC DNA]</scope>
    <source>
        <strain>ATCC 27774 / DSM 6949 / MB</strain>
    </source>
</reference>
<protein>
    <recommendedName>
        <fullName evidence="1">tRNA N6-adenosine threonylcarbamoyltransferase</fullName>
        <ecNumber evidence="1">2.3.1.234</ecNumber>
    </recommendedName>
    <alternativeName>
        <fullName evidence="1">N6-L-threonylcarbamoyladenine synthase</fullName>
        <shortName evidence="1">t(6)A synthase</shortName>
    </alternativeName>
    <alternativeName>
        <fullName evidence="1">t(6)A37 threonylcarbamoyladenosine biosynthesis protein TsaD</fullName>
    </alternativeName>
    <alternativeName>
        <fullName evidence="1">tRNA threonylcarbamoyladenosine biosynthesis protein TsaD</fullName>
    </alternativeName>
</protein>
<organism>
    <name type="scientific">Desulfovibrio desulfuricans (strain ATCC 27774 / DSM 6949 / MB)</name>
    <dbReference type="NCBI Taxonomy" id="525146"/>
    <lineage>
        <taxon>Bacteria</taxon>
        <taxon>Pseudomonadati</taxon>
        <taxon>Thermodesulfobacteriota</taxon>
        <taxon>Desulfovibrionia</taxon>
        <taxon>Desulfovibrionales</taxon>
        <taxon>Desulfovibrionaceae</taxon>
        <taxon>Desulfovibrio</taxon>
    </lineage>
</organism>
<proteinExistence type="inferred from homology"/>
<accession>B8J025</accession>
<comment type="function">
    <text evidence="1">Required for the formation of a threonylcarbamoyl group on adenosine at position 37 (t(6)A37) in tRNAs that read codons beginning with adenine. Is involved in the transfer of the threonylcarbamoyl moiety of threonylcarbamoyl-AMP (TC-AMP) to the N6 group of A37, together with TsaE and TsaB. TsaD likely plays a direct catalytic role in this reaction.</text>
</comment>
<comment type="catalytic activity">
    <reaction evidence="1">
        <text>L-threonylcarbamoyladenylate + adenosine(37) in tRNA = N(6)-L-threonylcarbamoyladenosine(37) in tRNA + AMP + H(+)</text>
        <dbReference type="Rhea" id="RHEA:37059"/>
        <dbReference type="Rhea" id="RHEA-COMP:10162"/>
        <dbReference type="Rhea" id="RHEA-COMP:10163"/>
        <dbReference type="ChEBI" id="CHEBI:15378"/>
        <dbReference type="ChEBI" id="CHEBI:73682"/>
        <dbReference type="ChEBI" id="CHEBI:74411"/>
        <dbReference type="ChEBI" id="CHEBI:74418"/>
        <dbReference type="ChEBI" id="CHEBI:456215"/>
        <dbReference type="EC" id="2.3.1.234"/>
    </reaction>
</comment>
<comment type="cofactor">
    <cofactor evidence="1">
        <name>Fe(2+)</name>
        <dbReference type="ChEBI" id="CHEBI:29033"/>
    </cofactor>
    <text evidence="1">Binds 1 Fe(2+) ion per subunit.</text>
</comment>
<comment type="subcellular location">
    <subcellularLocation>
        <location evidence="1">Cytoplasm</location>
    </subcellularLocation>
</comment>
<comment type="similarity">
    <text evidence="1">Belongs to the KAE1 / TsaD family.</text>
</comment>
<gene>
    <name evidence="1" type="primary">tsaD</name>
    <name type="synonym">gcp</name>
    <name type="ordered locus">Ddes_1198</name>
</gene>